<protein>
    <recommendedName>
        <fullName evidence="1">Methylthioribose kinase</fullName>
        <shortName evidence="1">MTR kinase</shortName>
        <ecNumber evidence="1">2.7.1.100</ecNumber>
    </recommendedName>
</protein>
<evidence type="ECO:0000255" key="1">
    <source>
        <dbReference type="HAMAP-Rule" id="MF_01683"/>
    </source>
</evidence>
<name>MTNK_ERWT9</name>
<comment type="function">
    <text evidence="1">Catalyzes the phosphorylation of methylthioribose into methylthioribose-1-phosphate.</text>
</comment>
<comment type="catalytic activity">
    <reaction evidence="1">
        <text>5-(methylsulfanyl)-D-ribose + ATP = 5-(methylsulfanyl)-alpha-D-ribose 1-phosphate + ADP + H(+)</text>
        <dbReference type="Rhea" id="RHEA:22312"/>
        <dbReference type="ChEBI" id="CHEBI:15378"/>
        <dbReference type="ChEBI" id="CHEBI:30616"/>
        <dbReference type="ChEBI" id="CHEBI:58533"/>
        <dbReference type="ChEBI" id="CHEBI:78440"/>
        <dbReference type="ChEBI" id="CHEBI:456216"/>
        <dbReference type="EC" id="2.7.1.100"/>
    </reaction>
</comment>
<comment type="pathway">
    <text evidence="1">Amino-acid biosynthesis; L-methionine biosynthesis via salvage pathway; S-methyl-5-thio-alpha-D-ribose 1-phosphate from S-methyl-5'-thioadenosine (hydrolase route): step 2/2.</text>
</comment>
<comment type="subunit">
    <text evidence="1">Homodimer.</text>
</comment>
<comment type="similarity">
    <text evidence="1">Belongs to the methylthioribose kinase family.</text>
</comment>
<sequence>MSQYRTFAAADAVEYARQFGGVDNPNSLVDALEVGDGNLNLVFRIFDTAGVSRVIVKQALPWVRCVGESWPLTLDRARLEAEVLIEHGKFCPQHTVNILHYDPLLAVTVMEDLSDHAIWRADLVKGIDWPQAAGQLGDYLAQTLFHTSDFFQHPHQKKADVIRFTNPELCDITEELFFNEPYEVHARNAYPRALEPLAESLREDHELRVAVAGLKHRFYSNAEALLHGDVHSGSIFVAEGSLKVIDAEFGFYGPIGFDIGSALGNLLISYCAAPGLLPPREAADAREKRLNDVRQLWQSFAEGFLALAAEKSRDRALAVPGYASTFLAKIWRDSVGYSGTELIRRTVGMSQVADIKGIQDDAMRVECVRQAITLGRSLILLADHVADIDALIARIRQNG</sequence>
<gene>
    <name evidence="1" type="primary">mtnK</name>
    <name type="ordered locus">ETA_26050</name>
</gene>
<accession>B2VIQ9</accession>
<dbReference type="EC" id="2.7.1.100" evidence="1"/>
<dbReference type="EMBL" id="CU468135">
    <property type="protein sequence ID" value="CAO97651.1"/>
    <property type="molecule type" value="Genomic_DNA"/>
</dbReference>
<dbReference type="RefSeq" id="WP_012442316.1">
    <property type="nucleotide sequence ID" value="NC_010694.1"/>
</dbReference>
<dbReference type="SMR" id="B2VIQ9"/>
<dbReference type="STRING" id="465817.ETA_26050"/>
<dbReference type="KEGG" id="eta:ETA_26050"/>
<dbReference type="eggNOG" id="COG4857">
    <property type="taxonomic scope" value="Bacteria"/>
</dbReference>
<dbReference type="HOGENOM" id="CLU_033681_0_0_6"/>
<dbReference type="OrthoDB" id="9777791at2"/>
<dbReference type="UniPathway" id="UPA00904">
    <property type="reaction ID" value="UER00872"/>
</dbReference>
<dbReference type="Proteomes" id="UP000001726">
    <property type="component" value="Chromosome"/>
</dbReference>
<dbReference type="GO" id="GO:0005524">
    <property type="term" value="F:ATP binding"/>
    <property type="evidence" value="ECO:0007669"/>
    <property type="project" value="UniProtKB-UniRule"/>
</dbReference>
<dbReference type="GO" id="GO:0046522">
    <property type="term" value="F:S-methyl-5-thioribose kinase activity"/>
    <property type="evidence" value="ECO:0007669"/>
    <property type="project" value="UniProtKB-UniRule"/>
</dbReference>
<dbReference type="GO" id="GO:0019509">
    <property type="term" value="P:L-methionine salvage from methylthioadenosine"/>
    <property type="evidence" value="ECO:0007669"/>
    <property type="project" value="UniProtKB-UniRule"/>
</dbReference>
<dbReference type="Gene3D" id="3.90.1200.10">
    <property type="match status" value="1"/>
</dbReference>
<dbReference type="Gene3D" id="3.30.200.20">
    <property type="entry name" value="Phosphorylase Kinase, domain 1"/>
    <property type="match status" value="1"/>
</dbReference>
<dbReference type="HAMAP" id="MF_01683">
    <property type="entry name" value="Salvage_MtnK"/>
    <property type="match status" value="1"/>
</dbReference>
<dbReference type="InterPro" id="IPR002575">
    <property type="entry name" value="Aminoglycoside_PTrfase"/>
</dbReference>
<dbReference type="InterPro" id="IPR011009">
    <property type="entry name" value="Kinase-like_dom_sf"/>
</dbReference>
<dbReference type="InterPro" id="IPR009212">
    <property type="entry name" value="Methylthioribose_kinase"/>
</dbReference>
<dbReference type="NCBIfam" id="TIGR01767">
    <property type="entry name" value="MTRK"/>
    <property type="match status" value="1"/>
</dbReference>
<dbReference type="PANTHER" id="PTHR34273">
    <property type="entry name" value="METHYLTHIORIBOSE KINASE"/>
    <property type="match status" value="1"/>
</dbReference>
<dbReference type="PANTHER" id="PTHR34273:SF2">
    <property type="entry name" value="METHYLTHIORIBOSE KINASE"/>
    <property type="match status" value="1"/>
</dbReference>
<dbReference type="Pfam" id="PF01636">
    <property type="entry name" value="APH"/>
    <property type="match status" value="1"/>
</dbReference>
<dbReference type="PIRSF" id="PIRSF031134">
    <property type="entry name" value="MTRK"/>
    <property type="match status" value="1"/>
</dbReference>
<dbReference type="SUPFAM" id="SSF56112">
    <property type="entry name" value="Protein kinase-like (PK-like)"/>
    <property type="match status" value="1"/>
</dbReference>
<proteinExistence type="inferred from homology"/>
<organism>
    <name type="scientific">Erwinia tasmaniensis (strain DSM 17950 / CFBP 7177 / CIP 109463 / NCPPB 4357 / Et1/99)</name>
    <dbReference type="NCBI Taxonomy" id="465817"/>
    <lineage>
        <taxon>Bacteria</taxon>
        <taxon>Pseudomonadati</taxon>
        <taxon>Pseudomonadota</taxon>
        <taxon>Gammaproteobacteria</taxon>
        <taxon>Enterobacterales</taxon>
        <taxon>Erwiniaceae</taxon>
        <taxon>Erwinia</taxon>
    </lineage>
</organism>
<keyword id="KW-0028">Amino-acid biosynthesis</keyword>
<keyword id="KW-0067">ATP-binding</keyword>
<keyword id="KW-0418">Kinase</keyword>
<keyword id="KW-0486">Methionine biosynthesis</keyword>
<keyword id="KW-0547">Nucleotide-binding</keyword>
<keyword id="KW-1185">Reference proteome</keyword>
<keyword id="KW-0808">Transferase</keyword>
<feature type="chain" id="PRO_0000357342" description="Methylthioribose kinase">
    <location>
        <begin position="1"/>
        <end position="399"/>
    </location>
</feature>
<feature type="binding site" evidence="1">
    <location>
        <position position="40"/>
    </location>
    <ligand>
        <name>ATP</name>
        <dbReference type="ChEBI" id="CHEBI:30616"/>
    </ligand>
</feature>
<feature type="binding site" evidence="1">
    <location>
        <position position="57"/>
    </location>
    <ligand>
        <name>ATP</name>
        <dbReference type="ChEBI" id="CHEBI:30616"/>
    </ligand>
</feature>
<feature type="binding site" evidence="1">
    <location>
        <begin position="111"/>
        <end position="113"/>
    </location>
    <ligand>
        <name>ATP</name>
        <dbReference type="ChEBI" id="CHEBI:30616"/>
    </ligand>
</feature>
<feature type="binding site" evidence="1">
    <location>
        <position position="229"/>
    </location>
    <ligand>
        <name>substrate</name>
    </ligand>
</feature>
<feature type="binding site" evidence="1">
    <location>
        <begin position="246"/>
        <end position="248"/>
    </location>
    <ligand>
        <name>ATP</name>
        <dbReference type="ChEBI" id="CHEBI:30616"/>
    </ligand>
</feature>
<feature type="binding site" evidence="1">
    <location>
        <position position="344"/>
    </location>
    <ligand>
        <name>substrate</name>
    </ligand>
</feature>
<reference key="1">
    <citation type="journal article" date="2008" name="Environ. Microbiol.">
        <title>The genome of Erwinia tasmaniensis strain Et1/99, a non-pathogenic bacterium in the genus Erwinia.</title>
        <authorList>
            <person name="Kube M."/>
            <person name="Migdoll A.M."/>
            <person name="Mueller I."/>
            <person name="Kuhl H."/>
            <person name="Beck A."/>
            <person name="Reinhardt R."/>
            <person name="Geider K."/>
        </authorList>
    </citation>
    <scope>NUCLEOTIDE SEQUENCE [LARGE SCALE GENOMIC DNA]</scope>
    <source>
        <strain>DSM 17950 / CFBP 7177 / CIP 109463 / NCPPB 4357 / Et1/99</strain>
    </source>
</reference>